<name>DAPD_HELPY</name>
<evidence type="ECO:0000255" key="1">
    <source>
        <dbReference type="HAMAP-Rule" id="MF_02122"/>
    </source>
</evidence>
<organism>
    <name type="scientific">Helicobacter pylori (strain ATCC 700392 / 26695)</name>
    <name type="common">Campylobacter pylori</name>
    <dbReference type="NCBI Taxonomy" id="85962"/>
    <lineage>
        <taxon>Bacteria</taxon>
        <taxon>Pseudomonadati</taxon>
        <taxon>Campylobacterota</taxon>
        <taxon>Epsilonproteobacteria</taxon>
        <taxon>Campylobacterales</taxon>
        <taxon>Helicobacteraceae</taxon>
        <taxon>Helicobacter</taxon>
    </lineage>
</organism>
<comment type="function">
    <text evidence="1">Catalyzes the conversion of the cyclic tetrahydrodipicolinate (THDP) into the acyclic N-succinyl-L-2-amino-6-oxopimelate using succinyl-CoA.</text>
</comment>
<comment type="catalytic activity">
    <reaction evidence="1">
        <text>(S)-2,3,4,5-tetrahydrodipicolinate + succinyl-CoA + H2O = (S)-2-succinylamino-6-oxoheptanedioate + CoA</text>
        <dbReference type="Rhea" id="RHEA:17325"/>
        <dbReference type="ChEBI" id="CHEBI:15377"/>
        <dbReference type="ChEBI" id="CHEBI:15685"/>
        <dbReference type="ChEBI" id="CHEBI:16845"/>
        <dbReference type="ChEBI" id="CHEBI:57287"/>
        <dbReference type="ChEBI" id="CHEBI:57292"/>
        <dbReference type="EC" id="2.3.1.117"/>
    </reaction>
</comment>
<comment type="pathway">
    <text evidence="1">Amino-acid biosynthesis; L-lysine biosynthesis via DAP pathway; LL-2,6-diaminopimelate from (S)-tetrahydrodipicolinate (succinylase route): step 1/3.</text>
</comment>
<comment type="subunit">
    <text evidence="1">Homotrimer.</text>
</comment>
<comment type="subcellular location">
    <subcellularLocation>
        <location evidence="1">Cytoplasm</location>
    </subcellularLocation>
</comment>
<comment type="similarity">
    <text evidence="1">Belongs to the type 2 tetrahydrodipicolinate N-succinyltransferase family.</text>
</comment>
<gene>
    <name evidence="1" type="primary">dapD</name>
    <name type="ordered locus">HP_0626</name>
</gene>
<sequence>MINKFKNFVSNYQQSNHYKEPLGFGIARVDIAPISKKILCATYPVLNWKDENLGSYAVFCNSLSKEKILKESASERVIEIDESFVLKALDFYTPFLNEAYSNKMAHKNIQVVLELLKALEENRLKNSDGESLYRLVILYEDKPCESVESAYMKLLALSLGKAPLRSLNLEGIFNQLSNAAWSGNKPYELEWLRMNEVALKMRDHFPSIDFIDKFPRYLMQLIPEFDNIRLLDSSKTRFGAYLGTGGYTQMPGASYVNFNAGAMGVCMNEGRISSSVVVGAGTDIGGGASVLGVLSGGNNNPISIGKNCLLGANSVTGISLGDGCIVDAGVAILAGSVIEIEENEFKKLLEVNSALEKHANNLYKGKELSGKNGVHFRSNSQNGKLIAFRSVKKIELNQNLH</sequence>
<feature type="chain" id="PRO_0000412260" description="2,3,4,5-tetrahydropyridine-2,6-dicarboxylate N-succinyltransferase">
    <location>
        <begin position="1"/>
        <end position="401"/>
    </location>
</feature>
<feature type="active site" description="Acyl-anhydride intermediate" evidence="1">
    <location>
        <position position="269"/>
    </location>
</feature>
<feature type="binding site" evidence="1">
    <location>
        <position position="271"/>
    </location>
    <ligand>
        <name>succinyl-CoA</name>
        <dbReference type="ChEBI" id="CHEBI:57292"/>
    </ligand>
</feature>
<feature type="binding site" evidence="1">
    <location>
        <position position="286"/>
    </location>
    <ligand>
        <name>succinyl-CoA</name>
        <dbReference type="ChEBI" id="CHEBI:57292"/>
    </ligand>
</feature>
<feature type="binding site" evidence="1">
    <location>
        <position position="289"/>
    </location>
    <ligand>
        <name>succinyl-CoA</name>
        <dbReference type="ChEBI" id="CHEBI:57292"/>
    </ligand>
</feature>
<feature type="binding site" evidence="1">
    <location>
        <position position="312"/>
    </location>
    <ligand>
        <name>succinyl-CoA</name>
        <dbReference type="ChEBI" id="CHEBI:57292"/>
    </ligand>
</feature>
<feature type="binding site" evidence="1">
    <location>
        <begin position="327"/>
        <end position="328"/>
    </location>
    <ligand>
        <name>succinyl-CoA</name>
        <dbReference type="ChEBI" id="CHEBI:57292"/>
    </ligand>
</feature>
<feature type="binding site" evidence="1">
    <location>
        <position position="335"/>
    </location>
    <ligand>
        <name>succinyl-CoA</name>
        <dbReference type="ChEBI" id="CHEBI:57292"/>
    </ligand>
</feature>
<feature type="binding site" evidence="1">
    <location>
        <position position="364"/>
    </location>
    <ligand>
        <name>succinyl-CoA</name>
        <dbReference type="ChEBI" id="CHEBI:57292"/>
    </ligand>
</feature>
<dbReference type="EC" id="2.3.1.117" evidence="1"/>
<dbReference type="EMBL" id="AE000511">
    <property type="protein sequence ID" value="AAD07696.1"/>
    <property type="molecule type" value="Genomic_DNA"/>
</dbReference>
<dbReference type="PIR" id="B64598">
    <property type="entry name" value="B64598"/>
</dbReference>
<dbReference type="RefSeq" id="NP_207420.1">
    <property type="nucleotide sequence ID" value="NC_000915.1"/>
</dbReference>
<dbReference type="RefSeq" id="WP_000608576.1">
    <property type="nucleotide sequence ID" value="NC_018939.1"/>
</dbReference>
<dbReference type="SMR" id="O25343"/>
<dbReference type="DIP" id="DIP-3232N"/>
<dbReference type="IntAct" id="O25343">
    <property type="interactions" value="5"/>
</dbReference>
<dbReference type="MINT" id="O25343"/>
<dbReference type="STRING" id="85962.HP_0626"/>
<dbReference type="PaxDb" id="85962-C694_03240"/>
<dbReference type="EnsemblBacteria" id="AAD07696">
    <property type="protein sequence ID" value="AAD07696"/>
    <property type="gene ID" value="HP_0626"/>
</dbReference>
<dbReference type="KEGG" id="heo:C694_03240"/>
<dbReference type="KEGG" id="hpy:HP_0626"/>
<dbReference type="PATRIC" id="fig|85962.47.peg.676"/>
<dbReference type="eggNOG" id="COG2171">
    <property type="taxonomic scope" value="Bacteria"/>
</dbReference>
<dbReference type="InParanoid" id="O25343"/>
<dbReference type="OrthoDB" id="9782799at2"/>
<dbReference type="PhylomeDB" id="O25343"/>
<dbReference type="UniPathway" id="UPA00034">
    <property type="reaction ID" value="UER00019"/>
</dbReference>
<dbReference type="Proteomes" id="UP000000429">
    <property type="component" value="Chromosome"/>
</dbReference>
<dbReference type="GO" id="GO:0005737">
    <property type="term" value="C:cytoplasm"/>
    <property type="evidence" value="ECO:0007669"/>
    <property type="project" value="UniProtKB-SubCell"/>
</dbReference>
<dbReference type="GO" id="GO:0008666">
    <property type="term" value="F:2,3,4,5-tetrahydropyridine-2,6-dicarboxylate N-succinyltransferase activity"/>
    <property type="evidence" value="ECO:0007669"/>
    <property type="project" value="UniProtKB-EC"/>
</dbReference>
<dbReference type="GO" id="GO:0019877">
    <property type="term" value="P:diaminopimelate biosynthetic process"/>
    <property type="evidence" value="ECO:0007669"/>
    <property type="project" value="UniProtKB-KW"/>
</dbReference>
<dbReference type="GO" id="GO:0009089">
    <property type="term" value="P:lysine biosynthetic process via diaminopimelate"/>
    <property type="evidence" value="ECO:0007669"/>
    <property type="project" value="UniProtKB-UniPathway"/>
</dbReference>
<dbReference type="CDD" id="cd04649">
    <property type="entry name" value="LbH_THP_succinylT_putative"/>
    <property type="match status" value="1"/>
</dbReference>
<dbReference type="Gene3D" id="3.30.70.2010">
    <property type="match status" value="1"/>
</dbReference>
<dbReference type="Gene3D" id="2.160.10.10">
    <property type="entry name" value="Hexapeptide repeat proteins"/>
    <property type="match status" value="1"/>
</dbReference>
<dbReference type="Gene3D" id="3.30.60.70">
    <property type="entry name" value="Trimeric LpxA-like enzymes"/>
    <property type="match status" value="1"/>
</dbReference>
<dbReference type="HAMAP" id="MF_02122">
    <property type="entry name" value="DapD_type2"/>
    <property type="match status" value="1"/>
</dbReference>
<dbReference type="InterPro" id="IPR001451">
    <property type="entry name" value="Hexapep"/>
</dbReference>
<dbReference type="InterPro" id="IPR032784">
    <property type="entry name" value="THDPS_M"/>
</dbReference>
<dbReference type="InterPro" id="IPR038361">
    <property type="entry name" value="THDPS_M_sf"/>
</dbReference>
<dbReference type="InterPro" id="IPR011004">
    <property type="entry name" value="Trimer_LpxA-like_sf"/>
</dbReference>
<dbReference type="InterPro" id="IPR026586">
    <property type="entry name" value="Type2_DapD"/>
</dbReference>
<dbReference type="Pfam" id="PF14602">
    <property type="entry name" value="Hexapep_2"/>
    <property type="match status" value="1"/>
</dbReference>
<dbReference type="Pfam" id="PF14789">
    <property type="entry name" value="THDPS_M"/>
    <property type="match status" value="1"/>
</dbReference>
<dbReference type="Pfam" id="PF14790">
    <property type="entry name" value="THDPS_N"/>
    <property type="match status" value="1"/>
</dbReference>
<dbReference type="SUPFAM" id="SSF51161">
    <property type="entry name" value="Trimeric LpxA-like enzymes"/>
    <property type="match status" value="1"/>
</dbReference>
<keyword id="KW-0012">Acyltransferase</keyword>
<keyword id="KW-0028">Amino-acid biosynthesis</keyword>
<keyword id="KW-0963">Cytoplasm</keyword>
<keyword id="KW-0220">Diaminopimelate biosynthesis</keyword>
<keyword id="KW-0457">Lysine biosynthesis</keyword>
<keyword id="KW-1185">Reference proteome</keyword>
<keyword id="KW-0808">Transferase</keyword>
<proteinExistence type="inferred from homology"/>
<protein>
    <recommendedName>
        <fullName evidence="1">2,3,4,5-tetrahydropyridine-2,6-dicarboxylate N-succinyltransferase</fullName>
        <ecNumber evidence="1">2.3.1.117</ecNumber>
    </recommendedName>
    <alternativeName>
        <fullName evidence="1">Tetrahydrodipicolinate N-succinyltransferase</fullName>
        <shortName evidence="1">THDP succinyltransferase</shortName>
        <shortName evidence="1">THP succinyltransferase</shortName>
    </alternativeName>
    <alternativeName>
        <fullName evidence="1">Tetrahydropicolinate succinylase</fullName>
    </alternativeName>
</protein>
<reference key="1">
    <citation type="journal article" date="1997" name="Nature">
        <title>The complete genome sequence of the gastric pathogen Helicobacter pylori.</title>
        <authorList>
            <person name="Tomb J.-F."/>
            <person name="White O."/>
            <person name="Kerlavage A.R."/>
            <person name="Clayton R.A."/>
            <person name="Sutton G.G."/>
            <person name="Fleischmann R.D."/>
            <person name="Ketchum K.A."/>
            <person name="Klenk H.-P."/>
            <person name="Gill S.R."/>
            <person name="Dougherty B.A."/>
            <person name="Nelson K.E."/>
            <person name="Quackenbush J."/>
            <person name="Zhou L."/>
            <person name="Kirkness E.F."/>
            <person name="Peterson S.N."/>
            <person name="Loftus B.J."/>
            <person name="Richardson D.L."/>
            <person name="Dodson R.J."/>
            <person name="Khalak H.G."/>
            <person name="Glodek A."/>
            <person name="McKenney K."/>
            <person name="FitzGerald L.M."/>
            <person name="Lee N."/>
            <person name="Adams M.D."/>
            <person name="Hickey E.K."/>
            <person name="Berg D.E."/>
            <person name="Gocayne J.D."/>
            <person name="Utterback T.R."/>
            <person name="Peterson J.D."/>
            <person name="Kelley J.M."/>
            <person name="Cotton M.D."/>
            <person name="Weidman J.F."/>
            <person name="Fujii C."/>
            <person name="Bowman C."/>
            <person name="Watthey L."/>
            <person name="Wallin E."/>
            <person name="Hayes W.S."/>
            <person name="Borodovsky M."/>
            <person name="Karp P.D."/>
            <person name="Smith H.O."/>
            <person name="Fraser C.M."/>
            <person name="Venter J.C."/>
        </authorList>
    </citation>
    <scope>NUCLEOTIDE SEQUENCE [LARGE SCALE GENOMIC DNA]</scope>
    <source>
        <strain>ATCC 700392 / 26695</strain>
    </source>
</reference>
<accession>O25343</accession>